<reference key="1">
    <citation type="journal article" date="1998" name="J. Mol. Biol.">
        <title>TAPASIN, DAXX, RGL2, HKE2 and four new genes (BING 1, 3 to 5) form a dense cluster at the centromeric end of the MHC.</title>
        <authorList>
            <person name="Herberg J.A."/>
            <person name="Beck S."/>
            <person name="Trowsdale J."/>
        </authorList>
    </citation>
    <scope>NUCLEOTIDE SEQUENCE [GENOMIC DNA]</scope>
</reference>
<reference key="2">
    <citation type="journal article" date="2004" name="Genome Res.">
        <title>The status, quality, and expansion of the NIH full-length cDNA project: the Mammalian Gene Collection (MGC).</title>
        <authorList>
            <consortium name="The MGC Project Team"/>
        </authorList>
    </citation>
    <scope>NUCLEOTIDE SEQUENCE [LARGE SCALE MRNA]</scope>
    <source>
        <tissue>Mammary gland</tissue>
        <tissue>Pancreas</tissue>
    </source>
</reference>
<reference key="3">
    <citation type="journal article" date="1998" name="Cell">
        <title>Prefoldin, a chaperone that delivers unfolded proteins to cytosolic chaperonin.</title>
        <authorList>
            <person name="Vainberg I.E."/>
            <person name="Lewis S.A."/>
            <person name="Rommelaere H."/>
            <person name="Ampe C."/>
            <person name="Vandekerckhove J."/>
            <person name="Klein H.L."/>
            <person name="Cowan N.J."/>
        </authorList>
    </citation>
    <scope>FUNCTION</scope>
</reference>
<reference key="4">
    <citation type="journal article" date="2009" name="Science">
        <title>Lysine acetylation targets protein complexes and co-regulates major cellular functions.</title>
        <authorList>
            <person name="Choudhary C."/>
            <person name="Kumar C."/>
            <person name="Gnad F."/>
            <person name="Nielsen M.L."/>
            <person name="Rehman M."/>
            <person name="Walther T.C."/>
            <person name="Olsen J.V."/>
            <person name="Mann M."/>
        </authorList>
    </citation>
    <scope>ACETYLATION [LARGE SCALE ANALYSIS] AT LYS-21 AND LYS-66</scope>
    <scope>IDENTIFICATION BY MASS SPECTROMETRY [LARGE SCALE ANALYSIS]</scope>
</reference>
<reference key="5">
    <citation type="journal article" date="2011" name="BMC Syst. Biol.">
        <title>Initial characterization of the human central proteome.</title>
        <authorList>
            <person name="Burkard T.R."/>
            <person name="Planyavsky M."/>
            <person name="Kaupe I."/>
            <person name="Breitwieser F.P."/>
            <person name="Buerckstuemmer T."/>
            <person name="Bennett K.L."/>
            <person name="Superti-Furga G."/>
            <person name="Colinge J."/>
        </authorList>
    </citation>
    <scope>IDENTIFICATION BY MASS SPECTROMETRY [LARGE SCALE ANALYSIS]</scope>
</reference>
<reference key="6">
    <citation type="journal article" date="2012" name="Proc. Natl. Acad. Sci. U.S.A.">
        <title>N-terminal acetylome analyses and functional insights of the N-terminal acetyltransferase NatB.</title>
        <authorList>
            <person name="Van Damme P."/>
            <person name="Lasa M."/>
            <person name="Polevoda B."/>
            <person name="Gazquez C."/>
            <person name="Elosegui-Artola A."/>
            <person name="Kim D.S."/>
            <person name="De Juan-Pardo E."/>
            <person name="Demeyer K."/>
            <person name="Hole K."/>
            <person name="Larrea E."/>
            <person name="Timmerman E."/>
            <person name="Prieto J."/>
            <person name="Arnesen T."/>
            <person name="Sherman F."/>
            <person name="Gevaert K."/>
            <person name="Aldabe R."/>
        </authorList>
    </citation>
    <scope>ACETYLATION [LARGE SCALE ANALYSIS] AT ALA-2</scope>
    <scope>CLEAVAGE OF INITIATOR METHIONINE [LARGE SCALE ANALYSIS]</scope>
    <scope>IDENTIFICATION BY MASS SPECTROMETRY [LARGE SCALE ANALYSIS]</scope>
</reference>
<reference key="7">
    <citation type="journal article" date="2014" name="Proc. Natl. Acad. Sci. U.S.A.">
        <title>Mapping of SUMO sites and analysis of SUMOylation changes induced by external stimuli.</title>
        <authorList>
            <person name="Impens F."/>
            <person name="Radoshevich L."/>
            <person name="Cossart P."/>
            <person name="Ribet D."/>
        </authorList>
    </citation>
    <scope>SUMOYLATION [LARGE SCALE ANALYSIS] AT LYS-66</scope>
    <scope>IDENTIFICATION BY MASS SPECTROMETRY [LARGE SCALE ANALYSIS]</scope>
</reference>
<reference key="8">
    <citation type="journal article" date="2017" name="Nat. Struct. Mol. Biol.">
        <title>Site-specific mapping of the human SUMO proteome reveals co-modification with phosphorylation.</title>
        <authorList>
            <person name="Hendriks I.A."/>
            <person name="Lyon D."/>
            <person name="Young C."/>
            <person name="Jensen L.J."/>
            <person name="Vertegaal A.C."/>
            <person name="Nielsen M.L."/>
        </authorList>
    </citation>
    <scope>SUMOYLATION [LARGE SCALE ANALYSIS] AT LYS-66</scope>
    <scope>IDENTIFICATION BY MASS SPECTROMETRY [LARGE SCALE ANALYSIS]</scope>
</reference>
<reference key="9">
    <citation type="journal article" date="2020" name="J. Proteome Res.">
        <title>Upstream ORF-Encoded ASDURF Is a Novel Prefoldin-like Subunit of the PAQosome.</title>
        <authorList>
            <person name="Cloutier P."/>
            <person name="Poitras C."/>
            <person name="Faubert D."/>
            <person name="Bouchard A."/>
            <person name="Blanchette M."/>
            <person name="Gauthier M.S."/>
            <person name="Coulombe B."/>
        </authorList>
    </citation>
    <scope>IDENTIFICATION IN THE PAQOSOME COMPLEX</scope>
</reference>
<keyword id="KW-0002">3D-structure</keyword>
<keyword id="KW-0007">Acetylation</keyword>
<keyword id="KW-0143">Chaperone</keyword>
<keyword id="KW-1017">Isopeptide bond</keyword>
<keyword id="KW-1267">Proteomics identification</keyword>
<keyword id="KW-1185">Reference proteome</keyword>
<keyword id="KW-0832">Ubl conjugation</keyword>
<dbReference type="EMBL" id="Z97184">
    <property type="protein sequence ID" value="CAB09993.1"/>
    <property type="molecule type" value="Genomic_DNA"/>
</dbReference>
<dbReference type="EMBL" id="BC039033">
    <property type="protein sequence ID" value="AAH39033.1"/>
    <property type="molecule type" value="mRNA"/>
</dbReference>
<dbReference type="EMBL" id="BC059783">
    <property type="protein sequence ID" value="AAH59783.1"/>
    <property type="molecule type" value="mRNA"/>
</dbReference>
<dbReference type="CCDS" id="CCDS4773.1"/>
<dbReference type="RefSeq" id="NP_001172110.1">
    <property type="nucleotide sequence ID" value="NM_001185181.3"/>
</dbReference>
<dbReference type="RefSeq" id="NP_001252524.1">
    <property type="nucleotide sequence ID" value="NM_001265595.2"/>
</dbReference>
<dbReference type="RefSeq" id="NP_001252525.1">
    <property type="nucleotide sequence ID" value="NM_001265596.1"/>
</dbReference>
<dbReference type="RefSeq" id="NP_055075.1">
    <property type="nucleotide sequence ID" value="NM_014260.4"/>
</dbReference>
<dbReference type="RefSeq" id="XP_047274033.1">
    <property type="nucleotide sequence ID" value="XM_047418077.1"/>
</dbReference>
<dbReference type="RefSeq" id="XP_054185697.1">
    <property type="nucleotide sequence ID" value="XM_054329722.1"/>
</dbReference>
<dbReference type="RefSeq" id="XP_054186193.1">
    <property type="nucleotide sequence ID" value="XM_054330218.1"/>
</dbReference>
<dbReference type="RefSeq" id="XP_054186733.1">
    <property type="nucleotide sequence ID" value="XM_054330758.1"/>
</dbReference>
<dbReference type="RefSeq" id="XP_054186965.1">
    <property type="nucleotide sequence ID" value="XM_054330990.1"/>
</dbReference>
<dbReference type="RefSeq" id="XP_054210006.1">
    <property type="nucleotide sequence ID" value="XM_054354031.1"/>
</dbReference>
<dbReference type="PDB" id="6NR8">
    <property type="method" value="EM"/>
    <property type="resolution" value="7.80 A"/>
    <property type="chains" value="6=13-114"/>
</dbReference>
<dbReference type="PDB" id="6NR9">
    <property type="method" value="EM"/>
    <property type="resolution" value="8.50 A"/>
    <property type="chains" value="6=13-114"/>
</dbReference>
<dbReference type="PDB" id="6NRB">
    <property type="method" value="EM"/>
    <property type="resolution" value="8.70 A"/>
    <property type="chains" value="6=13-114"/>
</dbReference>
<dbReference type="PDB" id="6NRC">
    <property type="method" value="EM"/>
    <property type="resolution" value="8.30 A"/>
    <property type="chains" value="6=13-114"/>
</dbReference>
<dbReference type="PDB" id="6NRD">
    <property type="method" value="EM"/>
    <property type="resolution" value="8.20 A"/>
    <property type="chains" value="6=13-114"/>
</dbReference>
<dbReference type="PDB" id="7WU7">
    <property type="method" value="EM"/>
    <property type="resolution" value="3.85 A"/>
    <property type="chains" value="6=1-129"/>
</dbReference>
<dbReference type="PDBsum" id="6NR8"/>
<dbReference type="PDBsum" id="6NR9"/>
<dbReference type="PDBsum" id="6NRB"/>
<dbReference type="PDBsum" id="6NRC"/>
<dbReference type="PDBsum" id="6NRD"/>
<dbReference type="PDBsum" id="7WU7"/>
<dbReference type="EMDB" id="EMD-0490"/>
<dbReference type="EMDB" id="EMD-0491"/>
<dbReference type="EMDB" id="EMD-0493"/>
<dbReference type="EMDB" id="EMD-0494"/>
<dbReference type="EMDB" id="EMD-0495"/>
<dbReference type="EMDB" id="EMD-32823"/>
<dbReference type="SMR" id="O15212"/>
<dbReference type="BioGRID" id="115734">
    <property type="interactions" value="177"/>
</dbReference>
<dbReference type="ComplexPortal" id="CPX-25767">
    <property type="entry name" value="Prefoldin co-chaperone complex"/>
</dbReference>
<dbReference type="ComplexPortal" id="CPX-6144">
    <property type="entry name" value="Prefoldin co-chaperone complex, URI1 variant"/>
</dbReference>
<dbReference type="ComplexPortal" id="CPX-6149">
    <property type="entry name" value="Prefoldin co-chaperone complex"/>
</dbReference>
<dbReference type="CORUM" id="O15212"/>
<dbReference type="DIP" id="DIP-50304N"/>
<dbReference type="FunCoup" id="O15212">
    <property type="interactions" value="1633"/>
</dbReference>
<dbReference type="IntAct" id="O15212">
    <property type="interactions" value="93"/>
</dbReference>
<dbReference type="MINT" id="O15212"/>
<dbReference type="STRING" id="9606.ENSP00000378563"/>
<dbReference type="GlyGen" id="O15212">
    <property type="glycosylation" value="1 site, 1 O-linked glycan (1 site)"/>
</dbReference>
<dbReference type="iPTMnet" id="O15212"/>
<dbReference type="PhosphoSitePlus" id="O15212"/>
<dbReference type="BioMuta" id="PFDN6"/>
<dbReference type="jPOST" id="O15212"/>
<dbReference type="MassIVE" id="O15212"/>
<dbReference type="PaxDb" id="9606-ENSP00000378563"/>
<dbReference type="PeptideAtlas" id="O15212"/>
<dbReference type="ProteomicsDB" id="48512"/>
<dbReference type="Pumba" id="O15212"/>
<dbReference type="TopDownProteomics" id="O15212"/>
<dbReference type="Antibodypedia" id="29059">
    <property type="antibodies" value="125 antibodies from 24 providers"/>
</dbReference>
<dbReference type="DNASU" id="10471"/>
<dbReference type="Ensembl" id="ENST00000374606.10">
    <property type="protein sequence ID" value="ENSP00000363734.5"/>
    <property type="gene ID" value="ENSG00000204220.12"/>
</dbReference>
<dbReference type="Ensembl" id="ENST00000374607.5">
    <property type="protein sequence ID" value="ENSP00000363735.1"/>
    <property type="gene ID" value="ENSG00000204220.12"/>
</dbReference>
<dbReference type="Ensembl" id="ENST00000374610.6">
    <property type="protein sequence ID" value="ENSP00000363738.2"/>
    <property type="gene ID" value="ENSG00000204220.12"/>
</dbReference>
<dbReference type="Ensembl" id="ENST00000383207.6">
    <property type="protein sequence ID" value="ENSP00000372694.2"/>
    <property type="gene ID" value="ENSG00000206283.10"/>
</dbReference>
<dbReference type="Ensembl" id="ENST00000395131.5">
    <property type="protein sequence ID" value="ENSP00000378563.1"/>
    <property type="gene ID" value="ENSG00000204220.12"/>
</dbReference>
<dbReference type="Ensembl" id="ENST00000399383.7">
    <property type="protein sequence ID" value="ENSP00000382314.3"/>
    <property type="gene ID" value="ENSG00000206283.10"/>
</dbReference>
<dbReference type="Ensembl" id="ENST00000399385.5">
    <property type="protein sequence ID" value="ENSP00000382316.1"/>
    <property type="gene ID" value="ENSG00000206283.10"/>
</dbReference>
<dbReference type="Ensembl" id="ENST00000412289.5">
    <property type="protein sequence ID" value="ENSP00000402212.1"/>
    <property type="gene ID" value="ENSG00000224782.8"/>
</dbReference>
<dbReference type="Ensembl" id="ENST00000425878.6">
    <property type="protein sequence ID" value="ENSP00000395462.2"/>
    <property type="gene ID" value="ENSG00000224782.8"/>
</dbReference>
<dbReference type="Ensembl" id="ENST00000431830.5">
    <property type="protein sequence ID" value="ENSP00000402553.1"/>
    <property type="gene ID" value="ENSG00000235692.8"/>
</dbReference>
<dbReference type="Ensembl" id="ENST00000432391.6">
    <property type="protein sequence ID" value="ENSP00000400152.2"/>
    <property type="gene ID" value="ENSG00000235692.8"/>
</dbReference>
<dbReference type="Ensembl" id="ENST00000442285.5">
    <property type="protein sequence ID" value="ENSP00000404773.1"/>
    <property type="gene ID" value="ENSG00000224782.8"/>
</dbReference>
<dbReference type="Ensembl" id="ENST00000445559.5">
    <property type="protein sequence ID" value="ENSP00000398171.1"/>
    <property type="gene ID" value="ENSG00000237335.8"/>
</dbReference>
<dbReference type="Ensembl" id="ENST00000448594.5">
    <property type="protein sequence ID" value="ENSP00000403771.1"/>
    <property type="gene ID" value="ENSG00000237335.8"/>
</dbReference>
<dbReference type="Ensembl" id="ENST00000451970.5">
    <property type="protein sequence ID" value="ENSP00000415678.1"/>
    <property type="gene ID" value="ENSG00000235692.8"/>
</dbReference>
<dbReference type="Ensembl" id="ENST00000452658.6">
    <property type="protein sequence ID" value="ENSP00000412319.2"/>
    <property type="gene ID" value="ENSG00000237335.8"/>
</dbReference>
<dbReference type="Ensembl" id="ENST00000547641.2">
    <property type="protein sequence ID" value="ENSP00000449925.1"/>
    <property type="gene ID" value="ENSG00000235692.8"/>
</dbReference>
<dbReference type="Ensembl" id="ENST00000547952.2">
    <property type="protein sequence ID" value="ENSP00000448784.1"/>
    <property type="gene ID" value="ENSG00000237335.8"/>
</dbReference>
<dbReference type="Ensembl" id="ENST00000548040.2">
    <property type="protein sequence ID" value="ENSP00000447540.1"/>
    <property type="gene ID" value="ENSG00000206283.10"/>
</dbReference>
<dbReference type="Ensembl" id="ENST00000552711.2">
    <property type="protein sequence ID" value="ENSP00000448607.1"/>
    <property type="gene ID" value="ENSG00000224782.8"/>
</dbReference>
<dbReference type="GeneID" id="10471"/>
<dbReference type="KEGG" id="hsa:10471"/>
<dbReference type="MANE-Select" id="ENST00000374606.10">
    <property type="protein sequence ID" value="ENSP00000363734.5"/>
    <property type="RefSeq nucleotide sequence ID" value="NM_001185181.3"/>
    <property type="RefSeq protein sequence ID" value="NP_001172110.1"/>
</dbReference>
<dbReference type="AGR" id="HGNC:4926"/>
<dbReference type="CTD" id="10471"/>
<dbReference type="DisGeNET" id="10471"/>
<dbReference type="GeneCards" id="PFDN6"/>
<dbReference type="HGNC" id="HGNC:4926">
    <property type="gene designation" value="PFDN6"/>
</dbReference>
<dbReference type="HPA" id="ENSG00000204220">
    <property type="expression patterns" value="Low tissue specificity"/>
</dbReference>
<dbReference type="MIM" id="605660">
    <property type="type" value="gene"/>
</dbReference>
<dbReference type="neXtProt" id="NX_O15212"/>
<dbReference type="OpenTargets" id="ENSG00000204220"/>
<dbReference type="PharmGKB" id="PA29304"/>
<dbReference type="VEuPathDB" id="HostDB:ENSG00000204220"/>
<dbReference type="eggNOG" id="KOG3478">
    <property type="taxonomic scope" value="Eukaryota"/>
</dbReference>
<dbReference type="GeneTree" id="ENSGT00390000010512"/>
<dbReference type="HOGENOM" id="CLU_125172_0_1_1"/>
<dbReference type="InParanoid" id="O15212"/>
<dbReference type="OMA" id="VQTEFAQ"/>
<dbReference type="OrthoDB" id="248120at2759"/>
<dbReference type="PAN-GO" id="O15212">
    <property type="GO annotations" value="5 GO annotations based on evolutionary models"/>
</dbReference>
<dbReference type="PhylomeDB" id="O15212"/>
<dbReference type="TreeFam" id="TF315166"/>
<dbReference type="PathwayCommons" id="O15212"/>
<dbReference type="Reactome" id="R-HSA-389957">
    <property type="pathway name" value="Prefoldin mediated transfer of substrate to CCT/TriC"/>
</dbReference>
<dbReference type="SignaLink" id="O15212"/>
<dbReference type="SIGNOR" id="O15212"/>
<dbReference type="BioGRID-ORCS" id="10471">
    <property type="hits" value="762 hits in 1165 CRISPR screens"/>
</dbReference>
<dbReference type="CD-CODE" id="91857CE7">
    <property type="entry name" value="Nucleolus"/>
</dbReference>
<dbReference type="ChiTaRS" id="PFDN6">
    <property type="organism name" value="human"/>
</dbReference>
<dbReference type="GeneWiki" id="Prefoldin_subunit_6"/>
<dbReference type="GenomeRNAi" id="10471"/>
<dbReference type="Pharos" id="O15212">
    <property type="development level" value="Tbio"/>
</dbReference>
<dbReference type="PRO" id="PR:O15212"/>
<dbReference type="Proteomes" id="UP000005640">
    <property type="component" value="Chromosome 6"/>
</dbReference>
<dbReference type="RNAct" id="O15212">
    <property type="molecule type" value="protein"/>
</dbReference>
<dbReference type="Bgee" id="ENSG00000204220">
    <property type="expression patterns" value="Expressed in left testis and 97 other cell types or tissues"/>
</dbReference>
<dbReference type="ExpressionAtlas" id="O15212">
    <property type="expression patterns" value="baseline and differential"/>
</dbReference>
<dbReference type="GO" id="GO:0005737">
    <property type="term" value="C:cytoplasm"/>
    <property type="evidence" value="ECO:0000318"/>
    <property type="project" value="GO_Central"/>
</dbReference>
<dbReference type="GO" id="GO:0016272">
    <property type="term" value="C:prefoldin complex"/>
    <property type="evidence" value="ECO:0000314"/>
    <property type="project" value="UniProtKB"/>
</dbReference>
<dbReference type="GO" id="GO:0101031">
    <property type="term" value="C:protein folding chaperone complex"/>
    <property type="evidence" value="ECO:0000303"/>
    <property type="project" value="ComplexPortal"/>
</dbReference>
<dbReference type="GO" id="GO:1990062">
    <property type="term" value="C:RPAP3/R2TP/prefoldin-like complex"/>
    <property type="evidence" value="ECO:0000353"/>
    <property type="project" value="ComplexPortal"/>
</dbReference>
<dbReference type="GO" id="GO:0001540">
    <property type="term" value="F:amyloid-beta binding"/>
    <property type="evidence" value="ECO:0000314"/>
    <property type="project" value="FlyBase"/>
</dbReference>
<dbReference type="GO" id="GO:0051087">
    <property type="term" value="F:protein-folding chaperone binding"/>
    <property type="evidence" value="ECO:0000314"/>
    <property type="project" value="UniProtKB"/>
</dbReference>
<dbReference type="GO" id="GO:0051082">
    <property type="term" value="F:unfolded protein binding"/>
    <property type="evidence" value="ECO:0000314"/>
    <property type="project" value="FlyBase"/>
</dbReference>
<dbReference type="GO" id="GO:0051131">
    <property type="term" value="P:chaperone-mediated protein complex assembly"/>
    <property type="evidence" value="ECO:0000314"/>
    <property type="project" value="UniProtKB"/>
</dbReference>
<dbReference type="GO" id="GO:0061077">
    <property type="term" value="P:chaperone-mediated protein folding"/>
    <property type="evidence" value="ECO:0000303"/>
    <property type="project" value="ComplexPortal"/>
</dbReference>
<dbReference type="GO" id="GO:1905907">
    <property type="term" value="P:negative regulation of amyloid fibril formation"/>
    <property type="evidence" value="ECO:0000314"/>
    <property type="project" value="FlyBase"/>
</dbReference>
<dbReference type="GO" id="GO:0006457">
    <property type="term" value="P:protein folding"/>
    <property type="evidence" value="ECO:0000314"/>
    <property type="project" value="FlyBase"/>
</dbReference>
<dbReference type="GO" id="GO:0050821">
    <property type="term" value="P:protein stabilization"/>
    <property type="evidence" value="ECO:0000303"/>
    <property type="project" value="ComplexPortal"/>
</dbReference>
<dbReference type="CDD" id="cd23161">
    <property type="entry name" value="Prefoldin_6"/>
    <property type="match status" value="1"/>
</dbReference>
<dbReference type="FunFam" id="1.10.287.370:FF:000003">
    <property type="entry name" value="Prefoldin subunit 6"/>
    <property type="match status" value="1"/>
</dbReference>
<dbReference type="Gene3D" id="1.10.287.370">
    <property type="match status" value="1"/>
</dbReference>
<dbReference type="InterPro" id="IPR002777">
    <property type="entry name" value="PFD_beta-like"/>
</dbReference>
<dbReference type="InterPro" id="IPR009053">
    <property type="entry name" value="Prefoldin"/>
</dbReference>
<dbReference type="PANTHER" id="PTHR21431">
    <property type="entry name" value="PREFOLDIN SUBUNIT 6"/>
    <property type="match status" value="1"/>
</dbReference>
<dbReference type="PANTHER" id="PTHR21431:SF0">
    <property type="entry name" value="PREFOLDIN SUBUNIT 6"/>
    <property type="match status" value="1"/>
</dbReference>
<dbReference type="Pfam" id="PF01920">
    <property type="entry name" value="Prefoldin_2"/>
    <property type="match status" value="1"/>
</dbReference>
<dbReference type="SUPFAM" id="SSF46579">
    <property type="entry name" value="Prefoldin"/>
    <property type="match status" value="1"/>
</dbReference>
<gene>
    <name type="primary">PFDN6</name>
    <name type="synonym">HKE2</name>
    <name type="synonym">PFD6</name>
</gene>
<protein>
    <recommendedName>
        <fullName>Prefoldin subunit 6</fullName>
    </recommendedName>
    <alternativeName>
        <fullName>Protein Ke2</fullName>
    </alternativeName>
</protein>
<name>PFD6_HUMAN</name>
<evidence type="ECO:0000250" key="1">
    <source>
        <dbReference type="UniProtKB" id="P52553"/>
    </source>
</evidence>
<evidence type="ECO:0000269" key="2">
    <source>
    </source>
</evidence>
<evidence type="ECO:0000269" key="3">
    <source>
    </source>
</evidence>
<evidence type="ECO:0000305" key="4"/>
<evidence type="ECO:0007744" key="5">
    <source>
    </source>
</evidence>
<evidence type="ECO:0007744" key="6">
    <source>
    </source>
</evidence>
<evidence type="ECO:0007744" key="7">
    <source>
    </source>
</evidence>
<evidence type="ECO:0007744" key="8">
    <source>
    </source>
</evidence>
<accession>O15212</accession>
<feature type="initiator methionine" description="Removed" evidence="6">
    <location>
        <position position="1"/>
    </location>
</feature>
<feature type="chain" id="PRO_0000124850" description="Prefoldin subunit 6">
    <location>
        <begin position="2"/>
        <end position="129"/>
    </location>
</feature>
<feature type="modified residue" description="N-acetylalanine" evidence="6">
    <location>
        <position position="2"/>
    </location>
</feature>
<feature type="modified residue" description="N6-acetyllysine" evidence="5">
    <location>
        <position position="21"/>
    </location>
</feature>
<feature type="modified residue" description="N6-acetyllysine; alternate" evidence="5">
    <location>
        <position position="66"/>
    </location>
</feature>
<feature type="cross-link" description="Glycyl lysine isopeptide (Lys-Gly) (interchain with G-Cter in SUMO1); alternate" evidence="7">
    <location>
        <position position="66"/>
    </location>
</feature>
<feature type="cross-link" description="Glycyl lysine isopeptide (Lys-Gly) (interchain with G-Cter in SUMO2); alternate" evidence="8">
    <location>
        <position position="66"/>
    </location>
</feature>
<comment type="function">
    <text evidence="3">Binds specifically to cytosolic chaperonin (c-CPN) and transfers target proteins to it. Binds to nascent polypeptide chain and promotes folding in an environment in which there are many competing pathways for nonnative proteins.</text>
</comment>
<comment type="subunit">
    <text evidence="1 2">Heterohexamer of two PFD-alpha type and four PFD-beta type subunits (By similarity). Component of the PAQosome complex which is responsible for the biogenesis of several protein complexes and which consists of R2TP complex members RUVBL1, RUVBL2, RPAP3 and PIH1D1, URI complex members PFDN2, PFDN6, PDRG1, UXT and URI1 as well as ASDURF, POLR2E and DNAAF10/WDR92 (PubMed:31738558).</text>
</comment>
<comment type="interaction">
    <interactant intactId="EBI-356973">
        <id>O15212</id>
    </interactant>
    <interactant intactId="EBI-745226">
        <id>Q13155</id>
        <label>AIMP2</label>
    </interactant>
    <organismsDiffer>false</organismsDiffer>
    <experiments>3</experiments>
</comment>
<comment type="interaction">
    <interactant intactId="EBI-356973">
        <id>O15212</id>
    </interactant>
    <interactant intactId="EBI-10175300">
        <id>Q8TD31-3</id>
        <label>CCHCR1</label>
    </interactant>
    <organismsDiffer>false</organismsDiffer>
    <experiments>3</experiments>
</comment>
<comment type="interaction">
    <interactant intactId="EBI-356973">
        <id>O15212</id>
    </interactant>
    <interactant intactId="EBI-740209">
        <id>P53567</id>
        <label>CEBPG</label>
    </interactant>
    <organismsDiffer>false</organismsDiffer>
    <experiments>3</experiments>
</comment>
<comment type="interaction">
    <interactant intactId="EBI-356973">
        <id>O15212</id>
    </interactant>
    <interactant intactId="EBI-4287196">
        <id>Q9UK22</id>
        <label>FBXO2</label>
    </interactant>
    <organismsDiffer>false</organismsDiffer>
    <experiments>3</experiments>
</comment>
<comment type="interaction">
    <interactant intactId="EBI-356973">
        <id>O15212</id>
    </interactant>
    <interactant intactId="EBI-348399">
        <id>P22607</id>
        <label>FGFR3</label>
    </interactant>
    <organismsDiffer>false</organismsDiffer>
    <experiments>3</experiments>
</comment>
<comment type="interaction">
    <interactant intactId="EBI-356973">
        <id>O15212</id>
    </interactant>
    <interactant intactId="EBI-2556193">
        <id>Q63ZY3</id>
        <label>KANK2</label>
    </interactant>
    <organismsDiffer>false</organismsDiffer>
    <experiments>3</experiments>
</comment>
<comment type="interaction">
    <interactant intactId="EBI-356973">
        <id>O15212</id>
    </interactant>
    <interactant intactId="EBI-14069005">
        <id>Q9BVG8-5</id>
        <label>KIFC3</label>
    </interactant>
    <organismsDiffer>false</organismsDiffer>
    <experiments>3</experiments>
</comment>
<comment type="interaction">
    <interactant intactId="EBI-356973">
        <id>O15212</id>
    </interactant>
    <interactant intactId="EBI-751857">
        <id>O15481</id>
        <label>MAGEB4</label>
    </interactant>
    <organismsDiffer>false</organismsDiffer>
    <experiments>3</experiments>
</comment>
<comment type="interaction">
    <interactant intactId="EBI-356973">
        <id>O15212</id>
    </interactant>
    <interactant intactId="EBI-11978579">
        <id>O95983-2</id>
        <label>MBD3</label>
    </interactant>
    <organismsDiffer>false</organismsDiffer>
    <experiments>3</experiments>
</comment>
<comment type="interaction">
    <interactant intactId="EBI-356973">
        <id>O15212</id>
    </interactant>
    <interactant intactId="EBI-747925">
        <id>Q9NQG5</id>
        <label>RPRD1B</label>
    </interactant>
    <organismsDiffer>false</organismsDiffer>
    <experiments>3</experiments>
</comment>
<comment type="similarity">
    <text evidence="4">Belongs to the prefoldin subunit beta family.</text>
</comment>
<proteinExistence type="evidence at protein level"/>
<sequence>MAELIQKKLQGEVEKYQQLQKDLSKSMSGRQKLEAQLTENNIVKEELALLDGSNVVFKLLGPVLVKQELGEARATVGKRLDYITAEIKRYESQLRDLERQSEQQRETLAQLQQEFQRAQAAKAGAPGKA</sequence>
<organism>
    <name type="scientific">Homo sapiens</name>
    <name type="common">Human</name>
    <dbReference type="NCBI Taxonomy" id="9606"/>
    <lineage>
        <taxon>Eukaryota</taxon>
        <taxon>Metazoa</taxon>
        <taxon>Chordata</taxon>
        <taxon>Craniata</taxon>
        <taxon>Vertebrata</taxon>
        <taxon>Euteleostomi</taxon>
        <taxon>Mammalia</taxon>
        <taxon>Eutheria</taxon>
        <taxon>Euarchontoglires</taxon>
        <taxon>Primates</taxon>
        <taxon>Haplorrhini</taxon>
        <taxon>Catarrhini</taxon>
        <taxon>Hominidae</taxon>
        <taxon>Homo</taxon>
    </lineage>
</organism>